<dbReference type="EC" id="3.4.25.2" evidence="1"/>
<dbReference type="EMBL" id="CP000492">
    <property type="protein sequence ID" value="ABL65568.1"/>
    <property type="status" value="ALT_INIT"/>
    <property type="molecule type" value="Genomic_DNA"/>
</dbReference>
<dbReference type="RefSeq" id="WP_041467627.1">
    <property type="nucleotide sequence ID" value="NC_008639.1"/>
</dbReference>
<dbReference type="SMR" id="A1BGP1"/>
<dbReference type="STRING" id="290317.Cpha266_1546"/>
<dbReference type="KEGG" id="cph:Cpha266_1546"/>
<dbReference type="eggNOG" id="COG5405">
    <property type="taxonomic scope" value="Bacteria"/>
</dbReference>
<dbReference type="HOGENOM" id="CLU_093872_1_0_10"/>
<dbReference type="OrthoDB" id="9804884at2"/>
<dbReference type="Proteomes" id="UP000008701">
    <property type="component" value="Chromosome"/>
</dbReference>
<dbReference type="GO" id="GO:0009376">
    <property type="term" value="C:HslUV protease complex"/>
    <property type="evidence" value="ECO:0007669"/>
    <property type="project" value="UniProtKB-UniRule"/>
</dbReference>
<dbReference type="GO" id="GO:0005839">
    <property type="term" value="C:proteasome core complex"/>
    <property type="evidence" value="ECO:0007669"/>
    <property type="project" value="InterPro"/>
</dbReference>
<dbReference type="GO" id="GO:0046872">
    <property type="term" value="F:metal ion binding"/>
    <property type="evidence" value="ECO:0007669"/>
    <property type="project" value="UniProtKB-KW"/>
</dbReference>
<dbReference type="GO" id="GO:0004298">
    <property type="term" value="F:threonine-type endopeptidase activity"/>
    <property type="evidence" value="ECO:0007669"/>
    <property type="project" value="UniProtKB-KW"/>
</dbReference>
<dbReference type="GO" id="GO:0051603">
    <property type="term" value="P:proteolysis involved in protein catabolic process"/>
    <property type="evidence" value="ECO:0007669"/>
    <property type="project" value="InterPro"/>
</dbReference>
<dbReference type="CDD" id="cd01913">
    <property type="entry name" value="protease_HslV"/>
    <property type="match status" value="1"/>
</dbReference>
<dbReference type="Gene3D" id="3.60.20.10">
    <property type="entry name" value="Glutamine Phosphoribosylpyrophosphate, subunit 1, domain 1"/>
    <property type="match status" value="1"/>
</dbReference>
<dbReference type="HAMAP" id="MF_00248">
    <property type="entry name" value="HslV"/>
    <property type="match status" value="1"/>
</dbReference>
<dbReference type="InterPro" id="IPR022281">
    <property type="entry name" value="ATP-dep_Prtase_HsIV_su"/>
</dbReference>
<dbReference type="InterPro" id="IPR029055">
    <property type="entry name" value="Ntn_hydrolases_N"/>
</dbReference>
<dbReference type="InterPro" id="IPR001353">
    <property type="entry name" value="Proteasome_sua/b"/>
</dbReference>
<dbReference type="InterPro" id="IPR023333">
    <property type="entry name" value="Proteasome_suB-type"/>
</dbReference>
<dbReference type="NCBIfam" id="TIGR03692">
    <property type="entry name" value="ATP_dep_HslV"/>
    <property type="match status" value="1"/>
</dbReference>
<dbReference type="NCBIfam" id="NF003964">
    <property type="entry name" value="PRK05456.1"/>
    <property type="match status" value="1"/>
</dbReference>
<dbReference type="PANTHER" id="PTHR32194:SF0">
    <property type="entry name" value="ATP-DEPENDENT PROTEASE SUBUNIT HSLV"/>
    <property type="match status" value="1"/>
</dbReference>
<dbReference type="PANTHER" id="PTHR32194">
    <property type="entry name" value="METALLOPROTEASE TLDD"/>
    <property type="match status" value="1"/>
</dbReference>
<dbReference type="Pfam" id="PF00227">
    <property type="entry name" value="Proteasome"/>
    <property type="match status" value="1"/>
</dbReference>
<dbReference type="PIRSF" id="PIRSF039093">
    <property type="entry name" value="HslV"/>
    <property type="match status" value="1"/>
</dbReference>
<dbReference type="SUPFAM" id="SSF56235">
    <property type="entry name" value="N-terminal nucleophile aminohydrolases (Ntn hydrolases)"/>
    <property type="match status" value="1"/>
</dbReference>
<dbReference type="PROSITE" id="PS51476">
    <property type="entry name" value="PROTEASOME_BETA_2"/>
    <property type="match status" value="1"/>
</dbReference>
<comment type="function">
    <text evidence="1">Protease subunit of a proteasome-like degradation complex believed to be a general protein degrading machinery.</text>
</comment>
<comment type="catalytic activity">
    <reaction evidence="1">
        <text>ATP-dependent cleavage of peptide bonds with broad specificity.</text>
        <dbReference type="EC" id="3.4.25.2"/>
    </reaction>
</comment>
<comment type="activity regulation">
    <text evidence="1">Allosterically activated by HslU binding.</text>
</comment>
<comment type="subunit">
    <text evidence="1">A double ring-shaped homohexamer of HslV is capped on each side by a ring-shaped HslU homohexamer. The assembly of the HslU/HslV complex is dependent on binding of ATP.</text>
</comment>
<comment type="subcellular location">
    <subcellularLocation>
        <location evidence="1">Cytoplasm</location>
    </subcellularLocation>
</comment>
<comment type="similarity">
    <text evidence="1">Belongs to the peptidase T1B family. HslV subfamily.</text>
</comment>
<comment type="sequence caution" evidence="2">
    <conflict type="erroneous initiation">
        <sequence resource="EMBL-CDS" id="ABL65568"/>
    </conflict>
</comment>
<feature type="chain" id="PRO_0000336769" description="ATP-dependent protease subunit HslV">
    <location>
        <begin position="1"/>
        <end position="182"/>
    </location>
</feature>
<feature type="active site" evidence="1">
    <location>
        <position position="12"/>
    </location>
</feature>
<feature type="binding site" evidence="1">
    <location>
        <position position="167"/>
    </location>
    <ligand>
        <name>Na(+)</name>
        <dbReference type="ChEBI" id="CHEBI:29101"/>
    </ligand>
</feature>
<feature type="binding site" evidence="1">
    <location>
        <position position="170"/>
    </location>
    <ligand>
        <name>Na(+)</name>
        <dbReference type="ChEBI" id="CHEBI:29101"/>
    </ligand>
</feature>
<feature type="binding site" evidence="1">
    <location>
        <position position="173"/>
    </location>
    <ligand>
        <name>Na(+)</name>
        <dbReference type="ChEBI" id="CHEBI:29101"/>
    </ligand>
</feature>
<accession>A1BGP1</accession>
<proteinExistence type="inferred from homology"/>
<keyword id="KW-0021">Allosteric enzyme</keyword>
<keyword id="KW-0963">Cytoplasm</keyword>
<keyword id="KW-0378">Hydrolase</keyword>
<keyword id="KW-0479">Metal-binding</keyword>
<keyword id="KW-0645">Protease</keyword>
<keyword id="KW-1185">Reference proteome</keyword>
<keyword id="KW-0915">Sodium</keyword>
<keyword id="KW-0888">Threonine protease</keyword>
<evidence type="ECO:0000255" key="1">
    <source>
        <dbReference type="HAMAP-Rule" id="MF_00248"/>
    </source>
</evidence>
<evidence type="ECO:0000305" key="2"/>
<name>HSLV_CHLPD</name>
<reference key="1">
    <citation type="submission" date="2006-12" db="EMBL/GenBank/DDBJ databases">
        <title>Complete sequence of Chlorobium phaeobacteroides DSM 266.</title>
        <authorList>
            <consortium name="US DOE Joint Genome Institute"/>
            <person name="Copeland A."/>
            <person name="Lucas S."/>
            <person name="Lapidus A."/>
            <person name="Barry K."/>
            <person name="Detter J.C."/>
            <person name="Glavina del Rio T."/>
            <person name="Hammon N."/>
            <person name="Israni S."/>
            <person name="Pitluck S."/>
            <person name="Goltsman E."/>
            <person name="Schmutz J."/>
            <person name="Larimer F."/>
            <person name="Land M."/>
            <person name="Hauser L."/>
            <person name="Mikhailova N."/>
            <person name="Li T."/>
            <person name="Overmann J."/>
            <person name="Bryant D.A."/>
            <person name="Richardson P."/>
        </authorList>
    </citation>
    <scope>NUCLEOTIDE SEQUENCE [LARGE SCALE GENOMIC DNA]</scope>
    <source>
        <strain>DSM 266 / SMG 266 / 2430</strain>
    </source>
</reference>
<sequence>MKHDEQLLIRSTTVLGVIRDGKAALGSDGQMTLGNTVLKHSTRKTRRLYHGQIIAGFAGATADAVTLLDRFEEKLEAFSGRLERAAVELARDWRTDKYLRRLEAMLAIVTAEKALIISGTGDVIEPEDGIVAIGSGSMYALAAARSLLAHTTLSAREIVHESLKIAADICIYTNDHIVIEEV</sequence>
<gene>
    <name evidence="1" type="primary">hslV</name>
    <name type="ordered locus">Cpha266_1546</name>
</gene>
<protein>
    <recommendedName>
        <fullName evidence="1">ATP-dependent protease subunit HslV</fullName>
        <ecNumber evidence="1">3.4.25.2</ecNumber>
    </recommendedName>
</protein>
<organism>
    <name type="scientific">Chlorobium phaeobacteroides (strain DSM 266 / SMG 266 / 2430)</name>
    <dbReference type="NCBI Taxonomy" id="290317"/>
    <lineage>
        <taxon>Bacteria</taxon>
        <taxon>Pseudomonadati</taxon>
        <taxon>Chlorobiota</taxon>
        <taxon>Chlorobiia</taxon>
        <taxon>Chlorobiales</taxon>
        <taxon>Chlorobiaceae</taxon>
        <taxon>Chlorobium/Pelodictyon group</taxon>
        <taxon>Chlorobium</taxon>
    </lineage>
</organism>